<evidence type="ECO:0000250" key="1"/>
<evidence type="ECO:0000255" key="2"/>
<evidence type="ECO:0000256" key="3">
    <source>
        <dbReference type="SAM" id="MobiDB-lite"/>
    </source>
</evidence>
<evidence type="ECO:0000305" key="4"/>
<name>FUT12_ARATH</name>
<protein>
    <recommendedName>
        <fullName>Putative fucosyltransferase-like protein</fullName>
    </recommendedName>
    <alternativeName>
        <fullName>FucT2</fullName>
    </alternativeName>
    <alternativeName>
        <fullName>FucTB</fullName>
    </alternativeName>
    <alternativeName>
        <fullName>Fucosyltransferase 12</fullName>
        <shortName>AtFUT12</shortName>
    </alternativeName>
</protein>
<accession>Q9FX97</accession>
<keyword id="KW-0025">Alternative splicing</keyword>
<keyword id="KW-0961">Cell wall biogenesis/degradation</keyword>
<keyword id="KW-0325">Glycoprotein</keyword>
<keyword id="KW-0328">Glycosyltransferase</keyword>
<keyword id="KW-0333">Golgi apparatus</keyword>
<keyword id="KW-0472">Membrane</keyword>
<keyword id="KW-1185">Reference proteome</keyword>
<keyword id="KW-0735">Signal-anchor</keyword>
<keyword id="KW-0808">Transferase</keyword>
<keyword id="KW-0812">Transmembrane</keyword>
<keyword id="KW-1133">Transmembrane helix</keyword>
<reference key="1">
    <citation type="journal article" date="2001" name="Biochim. Biophys. Acta">
        <title>Cloning and expression of cDNAs encoding alpha1,3-fucosyltransferase homologues from Arabidopsis thaliana.</title>
        <authorList>
            <person name="Wilson I.B."/>
            <person name="Rendic D."/>
            <person name="Freilinger A."/>
            <person name="Dumic J."/>
            <person name="Altmann F."/>
            <person name="Mucha J."/>
            <person name="Muller S."/>
            <person name="Hauser M.T."/>
        </authorList>
    </citation>
    <scope>NUCLEOTIDE SEQUENCE [MRNA] (ISOFORMS LONG AND SHORT)</scope>
    <source>
        <strain>cv. Columbia</strain>
        <tissue>Root</tissue>
    </source>
</reference>
<reference key="2">
    <citation type="journal article" date="2001" name="FEBS Lett.">
        <title>Plant members of the alpha1--&gt;3/4-fucosyltransferase gene family encode an alpha1--&gt;4-fucosyltransferase, potentially involved in Lewis(a) biosynthesis, and two core alpha1--&gt;3-fucosyltransferases.</title>
        <authorList>
            <person name="Bakker H."/>
            <person name="Schijlen E."/>
            <person name="de Vries T."/>
            <person name="Schiphorst W.E."/>
            <person name="Jordi W."/>
            <person name="Lommen A."/>
            <person name="Bosch D."/>
            <person name="van Die I."/>
        </authorList>
    </citation>
    <scope>NUCLEOTIDE SEQUENCE [MRNA] (ISOFORM LONG)</scope>
    <source>
        <strain>cv. Columbia</strain>
        <tissue>Silique</tissue>
    </source>
</reference>
<reference key="3">
    <citation type="journal article" date="2000" name="Nature">
        <title>Sequence and analysis of chromosome 1 of the plant Arabidopsis thaliana.</title>
        <authorList>
            <person name="Theologis A."/>
            <person name="Ecker J.R."/>
            <person name="Palm C.J."/>
            <person name="Federspiel N.A."/>
            <person name="Kaul S."/>
            <person name="White O."/>
            <person name="Alonso J."/>
            <person name="Altafi H."/>
            <person name="Araujo R."/>
            <person name="Bowman C.L."/>
            <person name="Brooks S.Y."/>
            <person name="Buehler E."/>
            <person name="Chan A."/>
            <person name="Chao Q."/>
            <person name="Chen H."/>
            <person name="Cheuk R.F."/>
            <person name="Chin C.W."/>
            <person name="Chung M.K."/>
            <person name="Conn L."/>
            <person name="Conway A.B."/>
            <person name="Conway A.R."/>
            <person name="Creasy T.H."/>
            <person name="Dewar K."/>
            <person name="Dunn P."/>
            <person name="Etgu P."/>
            <person name="Feldblyum T.V."/>
            <person name="Feng J.-D."/>
            <person name="Fong B."/>
            <person name="Fujii C.Y."/>
            <person name="Gill J.E."/>
            <person name="Goldsmith A.D."/>
            <person name="Haas B."/>
            <person name="Hansen N.F."/>
            <person name="Hughes B."/>
            <person name="Huizar L."/>
            <person name="Hunter J.L."/>
            <person name="Jenkins J."/>
            <person name="Johnson-Hopson C."/>
            <person name="Khan S."/>
            <person name="Khaykin E."/>
            <person name="Kim C.J."/>
            <person name="Koo H.L."/>
            <person name="Kremenetskaia I."/>
            <person name="Kurtz D.B."/>
            <person name="Kwan A."/>
            <person name="Lam B."/>
            <person name="Langin-Hooper S."/>
            <person name="Lee A."/>
            <person name="Lee J.M."/>
            <person name="Lenz C.A."/>
            <person name="Li J.H."/>
            <person name="Li Y.-P."/>
            <person name="Lin X."/>
            <person name="Liu S.X."/>
            <person name="Liu Z.A."/>
            <person name="Luros J.S."/>
            <person name="Maiti R."/>
            <person name="Marziali A."/>
            <person name="Militscher J."/>
            <person name="Miranda M."/>
            <person name="Nguyen M."/>
            <person name="Nierman W.C."/>
            <person name="Osborne B.I."/>
            <person name="Pai G."/>
            <person name="Peterson J."/>
            <person name="Pham P.K."/>
            <person name="Rizzo M."/>
            <person name="Rooney T."/>
            <person name="Rowley D."/>
            <person name="Sakano H."/>
            <person name="Salzberg S.L."/>
            <person name="Schwartz J.R."/>
            <person name="Shinn P."/>
            <person name="Southwick A.M."/>
            <person name="Sun H."/>
            <person name="Tallon L.J."/>
            <person name="Tambunga G."/>
            <person name="Toriumi M.J."/>
            <person name="Town C.D."/>
            <person name="Utterback T."/>
            <person name="Van Aken S."/>
            <person name="Vaysberg M."/>
            <person name="Vysotskaia V.S."/>
            <person name="Walker M."/>
            <person name="Wu D."/>
            <person name="Yu G."/>
            <person name="Fraser C.M."/>
            <person name="Venter J.C."/>
            <person name="Davis R.W."/>
        </authorList>
    </citation>
    <scope>NUCLEOTIDE SEQUENCE [LARGE SCALE GENOMIC DNA]</scope>
    <source>
        <strain>cv. Columbia</strain>
    </source>
</reference>
<reference key="4">
    <citation type="journal article" date="2017" name="Plant J.">
        <title>Araport11: a complete reannotation of the Arabidopsis thaliana reference genome.</title>
        <authorList>
            <person name="Cheng C.Y."/>
            <person name="Krishnakumar V."/>
            <person name="Chan A.P."/>
            <person name="Thibaud-Nissen F."/>
            <person name="Schobel S."/>
            <person name="Town C.D."/>
        </authorList>
    </citation>
    <scope>GENOME REANNOTATION</scope>
    <source>
        <strain>cv. Columbia</strain>
    </source>
</reference>
<reference key="5">
    <citation type="journal article" date="2003" name="Science">
        <title>Empirical analysis of transcriptional activity in the Arabidopsis genome.</title>
        <authorList>
            <person name="Yamada K."/>
            <person name="Lim J."/>
            <person name="Dale J.M."/>
            <person name="Chen H."/>
            <person name="Shinn P."/>
            <person name="Palm C.J."/>
            <person name="Southwick A.M."/>
            <person name="Wu H.C."/>
            <person name="Kim C.J."/>
            <person name="Nguyen M."/>
            <person name="Pham P.K."/>
            <person name="Cheuk R.F."/>
            <person name="Karlin-Newmann G."/>
            <person name="Liu S.X."/>
            <person name="Lam B."/>
            <person name="Sakano H."/>
            <person name="Wu T."/>
            <person name="Yu G."/>
            <person name="Miranda M."/>
            <person name="Quach H.L."/>
            <person name="Tripp M."/>
            <person name="Chang C.H."/>
            <person name="Lee J.M."/>
            <person name="Toriumi M.J."/>
            <person name="Chan M.M."/>
            <person name="Tang C.C."/>
            <person name="Onodera C.S."/>
            <person name="Deng J.M."/>
            <person name="Akiyama K."/>
            <person name="Ansari Y."/>
            <person name="Arakawa T."/>
            <person name="Banh J."/>
            <person name="Banno F."/>
            <person name="Bowser L."/>
            <person name="Brooks S.Y."/>
            <person name="Carninci P."/>
            <person name="Chao Q."/>
            <person name="Choy N."/>
            <person name="Enju A."/>
            <person name="Goldsmith A.D."/>
            <person name="Gurjal M."/>
            <person name="Hansen N.F."/>
            <person name="Hayashizaki Y."/>
            <person name="Johnson-Hopson C."/>
            <person name="Hsuan V.W."/>
            <person name="Iida K."/>
            <person name="Karnes M."/>
            <person name="Khan S."/>
            <person name="Koesema E."/>
            <person name="Ishida J."/>
            <person name="Jiang P.X."/>
            <person name="Jones T."/>
            <person name="Kawai J."/>
            <person name="Kamiya A."/>
            <person name="Meyers C."/>
            <person name="Nakajima M."/>
            <person name="Narusaka M."/>
            <person name="Seki M."/>
            <person name="Sakurai T."/>
            <person name="Satou M."/>
            <person name="Tamse R."/>
            <person name="Vaysberg M."/>
            <person name="Wallender E.K."/>
            <person name="Wong C."/>
            <person name="Yamamura Y."/>
            <person name="Yuan S."/>
            <person name="Shinozaki K."/>
            <person name="Davis R.W."/>
            <person name="Theologis A."/>
            <person name="Ecker J.R."/>
        </authorList>
    </citation>
    <scope>NUCLEOTIDE SEQUENCE [LARGE SCALE MRNA] (ISOFORM LONG)</scope>
</reference>
<feature type="chain" id="PRO_0000221125" description="Putative fucosyltransferase-like protein">
    <location>
        <begin position="1"/>
        <end position="513"/>
    </location>
</feature>
<feature type="topological domain" description="Cytoplasmic" evidence="2">
    <location>
        <begin position="1"/>
        <end position="39"/>
    </location>
</feature>
<feature type="transmembrane region" description="Helical; Signal-anchor for type II membrane protein" evidence="2">
    <location>
        <begin position="40"/>
        <end position="60"/>
    </location>
</feature>
<feature type="topological domain" description="Lumenal" evidence="2">
    <location>
        <begin position="61"/>
        <end position="513"/>
    </location>
</feature>
<feature type="region of interest" description="Disordered" evidence="3">
    <location>
        <begin position="1"/>
        <end position="34"/>
    </location>
</feature>
<feature type="compositionally biased region" description="Low complexity" evidence="3">
    <location>
        <begin position="25"/>
        <end position="34"/>
    </location>
</feature>
<feature type="glycosylation site" description="N-linked (GlcNAc...) asparagine" evidence="2">
    <location>
        <position position="348"/>
    </location>
</feature>
<feature type="glycosylation site" description="N-linked (GlcNAc...) asparagine" evidence="2">
    <location>
        <position position="493"/>
    </location>
</feature>
<comment type="function">
    <text>May be involved in cell wall biosynthesis. May act as a fucosyltransferase.</text>
</comment>
<comment type="pathway">
    <text>Protein modification; protein glycosylation.</text>
</comment>
<comment type="subcellular location">
    <subcellularLocation>
        <location evidence="1">Golgi apparatus</location>
        <location evidence="1">Golgi stack membrane</location>
        <topology evidence="1">Single-pass type II membrane protein</topology>
    </subcellularLocation>
    <text evidence="1">Membrane-bound form in trans cisternae of Golgi.</text>
</comment>
<comment type="alternative products">
    <event type="alternative splicing"/>
    <isoform>
        <id>Q9FX97-1</id>
        <name>Long</name>
        <sequence type="displayed"/>
    </isoform>
    <isoform>
        <id>Q9FX97-2</id>
        <name>Short</name>
        <sequence type="not described"/>
    </isoform>
</comment>
<comment type="miscellaneous">
    <molecule>Isoform Short</molecule>
    <text evidence="4">Unstable and lacks the key conserved region and thus would presumably lack the catalytic activity.</text>
</comment>
<comment type="similarity">
    <text evidence="4">Belongs to the glycosyltransferase 10 family.</text>
</comment>
<gene>
    <name type="primary">FUT12</name>
    <name type="ordered locus">At1g49710</name>
    <name type="ORF">F14J22.8</name>
    <name type="ORF">F14J22_18</name>
</gene>
<proteinExistence type="evidence at transcript level"/>
<organism>
    <name type="scientific">Arabidopsis thaliana</name>
    <name type="common">Mouse-ear cress</name>
    <dbReference type="NCBI Taxonomy" id="3702"/>
    <lineage>
        <taxon>Eukaryota</taxon>
        <taxon>Viridiplantae</taxon>
        <taxon>Streptophyta</taxon>
        <taxon>Embryophyta</taxon>
        <taxon>Tracheophyta</taxon>
        <taxon>Spermatophyta</taxon>
        <taxon>Magnoliopsida</taxon>
        <taxon>eudicotyledons</taxon>
        <taxon>Gunneridae</taxon>
        <taxon>Pentapetalae</taxon>
        <taxon>rosids</taxon>
        <taxon>malvids</taxon>
        <taxon>Brassicales</taxon>
        <taxon>Brassicaceae</taxon>
        <taxon>Camelineae</taxon>
        <taxon>Arabidopsis</taxon>
    </lineage>
</organism>
<dbReference type="EMBL" id="AJ404861">
    <property type="status" value="NOT_ANNOTATED_CDS"/>
    <property type="molecule type" value="mRNA"/>
</dbReference>
<dbReference type="EMBL" id="AJ345085">
    <property type="protein sequence ID" value="CAC78980.1"/>
    <property type="molecule type" value="mRNA"/>
</dbReference>
<dbReference type="EMBL" id="AC011807">
    <property type="protein sequence ID" value="AAG13053.1"/>
    <property type="molecule type" value="Genomic_DNA"/>
</dbReference>
<dbReference type="EMBL" id="CP002684">
    <property type="protein sequence ID" value="AEE32462.1"/>
    <property type="molecule type" value="Genomic_DNA"/>
</dbReference>
<dbReference type="EMBL" id="AY054522">
    <property type="protein sequence ID" value="AAK96713.1"/>
    <property type="molecule type" value="mRNA"/>
</dbReference>
<dbReference type="EMBL" id="BT002570">
    <property type="protein sequence ID" value="AAO00930.1"/>
    <property type="molecule type" value="mRNA"/>
</dbReference>
<dbReference type="PIR" id="F96533">
    <property type="entry name" value="F96533"/>
</dbReference>
<dbReference type="RefSeq" id="NP_175393.1">
    <molecule id="Q9FX97-1"/>
    <property type="nucleotide sequence ID" value="NM_103858.5"/>
</dbReference>
<dbReference type="SMR" id="Q9FX97"/>
<dbReference type="BioGRID" id="26619">
    <property type="interactions" value="2"/>
</dbReference>
<dbReference type="FunCoup" id="Q9FX97">
    <property type="interactions" value="1249"/>
</dbReference>
<dbReference type="STRING" id="3702.Q9FX97"/>
<dbReference type="CAZy" id="GT10">
    <property type="family name" value="Glycosyltransferase Family 10"/>
</dbReference>
<dbReference type="GlyCosmos" id="Q9FX97">
    <property type="glycosylation" value="2 sites, No reported glycans"/>
</dbReference>
<dbReference type="GlyGen" id="Q9FX97">
    <property type="glycosylation" value="2 sites"/>
</dbReference>
<dbReference type="iPTMnet" id="Q9FX97"/>
<dbReference type="PaxDb" id="3702-AT1G49710.1"/>
<dbReference type="ProteomicsDB" id="230565">
    <molecule id="Q9FX97-1"/>
</dbReference>
<dbReference type="EnsemblPlants" id="AT1G49710.1">
    <molecule id="Q9FX97-1"/>
    <property type="protein sequence ID" value="AT1G49710.1"/>
    <property type="gene ID" value="AT1G49710"/>
</dbReference>
<dbReference type="GeneID" id="841394"/>
<dbReference type="Gramene" id="AT1G49710.1">
    <molecule id="Q9FX97-1"/>
    <property type="protein sequence ID" value="AT1G49710.1"/>
    <property type="gene ID" value="AT1G49710"/>
</dbReference>
<dbReference type="KEGG" id="ath:AT1G49710"/>
<dbReference type="Araport" id="AT1G49710"/>
<dbReference type="TAIR" id="AT1G49710">
    <property type="gene designation" value="FUT12"/>
</dbReference>
<dbReference type="eggNOG" id="KOG2619">
    <property type="taxonomic scope" value="Eukaryota"/>
</dbReference>
<dbReference type="HOGENOM" id="CLU_040484_0_0_1"/>
<dbReference type="InParanoid" id="Q9FX97"/>
<dbReference type="OMA" id="CEEWLMR"/>
<dbReference type="PhylomeDB" id="Q9FX97"/>
<dbReference type="BioCyc" id="ARA:AT1G49710-MONOMER"/>
<dbReference type="BioCyc" id="MetaCyc:AT1G49710-MONOMER"/>
<dbReference type="UniPathway" id="UPA00378"/>
<dbReference type="PRO" id="PR:Q9FX97"/>
<dbReference type="Proteomes" id="UP000006548">
    <property type="component" value="Chromosome 1"/>
</dbReference>
<dbReference type="ExpressionAtlas" id="Q9FX97">
    <property type="expression patterns" value="baseline and differential"/>
</dbReference>
<dbReference type="GO" id="GO:0005768">
    <property type="term" value="C:endosome"/>
    <property type="evidence" value="ECO:0007005"/>
    <property type="project" value="TAIR"/>
</dbReference>
<dbReference type="GO" id="GO:0005794">
    <property type="term" value="C:Golgi apparatus"/>
    <property type="evidence" value="ECO:0007005"/>
    <property type="project" value="TAIR"/>
</dbReference>
<dbReference type="GO" id="GO:0032580">
    <property type="term" value="C:Golgi cisterna membrane"/>
    <property type="evidence" value="ECO:0007669"/>
    <property type="project" value="UniProtKB-SubCell"/>
</dbReference>
<dbReference type="GO" id="GO:0000138">
    <property type="term" value="C:Golgi trans cisterna"/>
    <property type="evidence" value="ECO:0007005"/>
    <property type="project" value="TAIR"/>
</dbReference>
<dbReference type="GO" id="GO:0005802">
    <property type="term" value="C:trans-Golgi network"/>
    <property type="evidence" value="ECO:0007005"/>
    <property type="project" value="TAIR"/>
</dbReference>
<dbReference type="GO" id="GO:0008417">
    <property type="term" value="F:fucosyltransferase activity"/>
    <property type="evidence" value="ECO:0000250"/>
    <property type="project" value="TAIR"/>
</dbReference>
<dbReference type="GO" id="GO:0071555">
    <property type="term" value="P:cell wall organization"/>
    <property type="evidence" value="ECO:0007669"/>
    <property type="project" value="UniProtKB-KW"/>
</dbReference>
<dbReference type="GO" id="GO:0006486">
    <property type="term" value="P:protein glycosylation"/>
    <property type="evidence" value="ECO:0007669"/>
    <property type="project" value="UniProtKB-UniPathway"/>
</dbReference>
<dbReference type="FunFam" id="3.40.50.11660:FF:000005">
    <property type="entry name" value="Glycoprotein 3-alpha-L-fucosyltransferase A"/>
    <property type="match status" value="1"/>
</dbReference>
<dbReference type="Gene3D" id="3.40.50.11660">
    <property type="entry name" value="Glycosyl transferase family 10, C-terminal domain"/>
    <property type="match status" value="1"/>
</dbReference>
<dbReference type="InterPro" id="IPR055270">
    <property type="entry name" value="Glyco_tran_10_C"/>
</dbReference>
<dbReference type="InterPro" id="IPR001503">
    <property type="entry name" value="Glyco_trans_10"/>
</dbReference>
<dbReference type="InterPro" id="IPR038577">
    <property type="entry name" value="GT10-like_C_sf"/>
</dbReference>
<dbReference type="PANTHER" id="PTHR11929">
    <property type="entry name" value="ALPHA- 1,3 -FUCOSYLTRANSFERASE"/>
    <property type="match status" value="1"/>
</dbReference>
<dbReference type="PANTHER" id="PTHR11929:SF220">
    <property type="entry name" value="FUCOSYLTRANSFERASE"/>
    <property type="match status" value="1"/>
</dbReference>
<dbReference type="Pfam" id="PF00852">
    <property type="entry name" value="Glyco_transf_10"/>
    <property type="match status" value="1"/>
</dbReference>
<dbReference type="SUPFAM" id="SSF53756">
    <property type="entry name" value="UDP-Glycosyltransferase/glycogen phosphorylase"/>
    <property type="match status" value="1"/>
</dbReference>
<sequence>MGVFSNLRGPRAGATHDEFPATNGSPSSSSSPSSSIKRKLSNLLPLCVALVVIAEIGFLGRLDKVALVDTLTDFFTQSPSLSQSPPARSDRKKIGLFTDRSCEEWLMREDSVTYSRDFTKDPIFISGGEKDFQWCSVDCTFGDSSGKTPDAAFGLGQKPGTLSIIRSMESAQYYPENDLAQARRRGYDIVMTTSLSSDVPVGYFSWAEYDIMSPVQPKTERAIAAAFISNCGARNFRLQALEALMKTNIKIDSYGGCHRNRDGKVDKVEALKRYKFSLAFENTNEEDYVTEKFFQSLVAGSVPVVVGPPNIEEFAPASDSFLHIKTMEDVEPVAKRMKYLAANPAAYNQTLRWKYEGPSDSFKALVDMAAVHSSCRLCIFLATRVREQEEESPNFKKRPCKCSRGGSDTVYHVFVRERGRFEMESVFLRGKSVTQEALESAVLAKFKSLKHEAVWKKERPGNLKGDKELKIHRIYPLGLTQRQALYNFKFEGNSSLSSHIQNNPCAKFEVVFV</sequence>